<feature type="chain" id="PRO_1000143150" description="Small ribosomal subunit protein uS15">
    <location>
        <begin position="1"/>
        <end position="89"/>
    </location>
</feature>
<proteinExistence type="inferred from homology"/>
<organism>
    <name type="scientific">Polynucleobacter necessarius subsp. necessarius (strain STIR1)</name>
    <dbReference type="NCBI Taxonomy" id="452638"/>
    <lineage>
        <taxon>Bacteria</taxon>
        <taxon>Pseudomonadati</taxon>
        <taxon>Pseudomonadota</taxon>
        <taxon>Betaproteobacteria</taxon>
        <taxon>Burkholderiales</taxon>
        <taxon>Burkholderiaceae</taxon>
        <taxon>Polynucleobacter</taxon>
    </lineage>
</organism>
<reference key="1">
    <citation type="journal article" date="2013" name="Proc. Natl. Acad. Sci. U.S.A.">
        <title>Polynucleobacter necessarius, a model for genome reduction in both free-living and symbiotic bacteria.</title>
        <authorList>
            <person name="Boscaro V."/>
            <person name="Felletti M."/>
            <person name="Vannini C."/>
            <person name="Ackerman M.S."/>
            <person name="Chain P.S."/>
            <person name="Malfatti S."/>
            <person name="Vergez L.M."/>
            <person name="Shin M."/>
            <person name="Doak T.G."/>
            <person name="Lynch M."/>
            <person name="Petroni G."/>
        </authorList>
    </citation>
    <scope>NUCLEOTIDE SEQUENCE [LARGE SCALE GENOMIC DNA]</scope>
    <source>
        <strain>STIR1</strain>
    </source>
</reference>
<gene>
    <name evidence="1" type="primary">rpsO</name>
    <name type="ordered locus">Pnec_0816</name>
</gene>
<keyword id="KW-0687">Ribonucleoprotein</keyword>
<keyword id="KW-0689">Ribosomal protein</keyword>
<keyword id="KW-0694">RNA-binding</keyword>
<keyword id="KW-0699">rRNA-binding</keyword>
<comment type="function">
    <text evidence="1">One of the primary rRNA binding proteins, it binds directly to 16S rRNA where it helps nucleate assembly of the platform of the 30S subunit by binding and bridging several RNA helices of the 16S rRNA.</text>
</comment>
<comment type="function">
    <text evidence="1">Forms an intersubunit bridge (bridge B4) with the 23S rRNA of the 50S subunit in the ribosome.</text>
</comment>
<comment type="subunit">
    <text evidence="1">Part of the 30S ribosomal subunit. Forms a bridge to the 50S subunit in the 70S ribosome, contacting the 23S rRNA.</text>
</comment>
<comment type="similarity">
    <text evidence="1">Belongs to the universal ribosomal protein uS15 family.</text>
</comment>
<sequence>MAVADIKTAKIVKENARSANDTGSPEVQVSLLTARINELTPHFKANTKDHHSRCGLLKMVSRRRRLLDYLKGKDLDCYRALIEKLGLRK</sequence>
<protein>
    <recommendedName>
        <fullName evidence="1">Small ribosomal subunit protein uS15</fullName>
    </recommendedName>
    <alternativeName>
        <fullName evidence="2">30S ribosomal protein S15</fullName>
    </alternativeName>
</protein>
<accession>B1XUJ4</accession>
<name>RS15_POLNS</name>
<evidence type="ECO:0000255" key="1">
    <source>
        <dbReference type="HAMAP-Rule" id="MF_01343"/>
    </source>
</evidence>
<evidence type="ECO:0000305" key="2"/>
<dbReference type="EMBL" id="CP001010">
    <property type="protein sequence ID" value="ACB44021.1"/>
    <property type="molecule type" value="Genomic_DNA"/>
</dbReference>
<dbReference type="SMR" id="B1XUJ4"/>
<dbReference type="STRING" id="452638.Pnec_0816"/>
<dbReference type="KEGG" id="pne:Pnec_0816"/>
<dbReference type="eggNOG" id="COG0184">
    <property type="taxonomic scope" value="Bacteria"/>
</dbReference>
<dbReference type="HOGENOM" id="CLU_148518_0_0_4"/>
<dbReference type="OrthoDB" id="9799262at2"/>
<dbReference type="GO" id="GO:0022627">
    <property type="term" value="C:cytosolic small ribosomal subunit"/>
    <property type="evidence" value="ECO:0007669"/>
    <property type="project" value="TreeGrafter"/>
</dbReference>
<dbReference type="GO" id="GO:0019843">
    <property type="term" value="F:rRNA binding"/>
    <property type="evidence" value="ECO:0007669"/>
    <property type="project" value="UniProtKB-UniRule"/>
</dbReference>
<dbReference type="GO" id="GO:0003735">
    <property type="term" value="F:structural constituent of ribosome"/>
    <property type="evidence" value="ECO:0007669"/>
    <property type="project" value="InterPro"/>
</dbReference>
<dbReference type="GO" id="GO:0006412">
    <property type="term" value="P:translation"/>
    <property type="evidence" value="ECO:0007669"/>
    <property type="project" value="UniProtKB-UniRule"/>
</dbReference>
<dbReference type="CDD" id="cd00353">
    <property type="entry name" value="Ribosomal_S15p_S13e"/>
    <property type="match status" value="1"/>
</dbReference>
<dbReference type="FunFam" id="1.10.287.10:FF:000002">
    <property type="entry name" value="30S ribosomal protein S15"/>
    <property type="match status" value="1"/>
</dbReference>
<dbReference type="Gene3D" id="6.10.250.3130">
    <property type="match status" value="1"/>
</dbReference>
<dbReference type="Gene3D" id="1.10.287.10">
    <property type="entry name" value="S15/NS1, RNA-binding"/>
    <property type="match status" value="1"/>
</dbReference>
<dbReference type="HAMAP" id="MF_01343_B">
    <property type="entry name" value="Ribosomal_uS15_B"/>
    <property type="match status" value="1"/>
</dbReference>
<dbReference type="InterPro" id="IPR000589">
    <property type="entry name" value="Ribosomal_uS15"/>
</dbReference>
<dbReference type="InterPro" id="IPR005290">
    <property type="entry name" value="Ribosomal_uS15_bac-type"/>
</dbReference>
<dbReference type="InterPro" id="IPR009068">
    <property type="entry name" value="uS15_NS1_RNA-bd_sf"/>
</dbReference>
<dbReference type="NCBIfam" id="TIGR00952">
    <property type="entry name" value="S15_bact"/>
    <property type="match status" value="1"/>
</dbReference>
<dbReference type="PANTHER" id="PTHR23321">
    <property type="entry name" value="RIBOSOMAL PROTEIN S15, BACTERIAL AND ORGANELLAR"/>
    <property type="match status" value="1"/>
</dbReference>
<dbReference type="PANTHER" id="PTHR23321:SF26">
    <property type="entry name" value="SMALL RIBOSOMAL SUBUNIT PROTEIN US15M"/>
    <property type="match status" value="1"/>
</dbReference>
<dbReference type="Pfam" id="PF00312">
    <property type="entry name" value="Ribosomal_S15"/>
    <property type="match status" value="1"/>
</dbReference>
<dbReference type="SMART" id="SM01387">
    <property type="entry name" value="Ribosomal_S15"/>
    <property type="match status" value="1"/>
</dbReference>
<dbReference type="SUPFAM" id="SSF47060">
    <property type="entry name" value="S15/NS1 RNA-binding domain"/>
    <property type="match status" value="1"/>
</dbReference>
<dbReference type="PROSITE" id="PS00362">
    <property type="entry name" value="RIBOSOMAL_S15"/>
    <property type="match status" value="1"/>
</dbReference>